<reference key="1">
    <citation type="journal article" date="2001" name="Nature">
        <title>Complete genome sequence of Salmonella enterica serovar Typhimurium LT2.</title>
        <authorList>
            <person name="McClelland M."/>
            <person name="Sanderson K.E."/>
            <person name="Spieth J."/>
            <person name="Clifton S.W."/>
            <person name="Latreille P."/>
            <person name="Courtney L."/>
            <person name="Porwollik S."/>
            <person name="Ali J."/>
            <person name="Dante M."/>
            <person name="Du F."/>
            <person name="Hou S."/>
            <person name="Layman D."/>
            <person name="Leonard S."/>
            <person name="Nguyen C."/>
            <person name="Scott K."/>
            <person name="Holmes A."/>
            <person name="Grewal N."/>
            <person name="Mulvaney E."/>
            <person name="Ryan E."/>
            <person name="Sun H."/>
            <person name="Florea L."/>
            <person name="Miller W."/>
            <person name="Stoneking T."/>
            <person name="Nhan M."/>
            <person name="Waterston R."/>
            <person name="Wilson R.K."/>
        </authorList>
    </citation>
    <scope>NUCLEOTIDE SEQUENCE [LARGE SCALE GENOMIC DNA]</scope>
    <source>
        <strain>LT2 / SGSC1412 / ATCC 700720</strain>
    </source>
</reference>
<evidence type="ECO:0000250" key="1"/>
<evidence type="ECO:0000255" key="2">
    <source>
        <dbReference type="PROSITE-ProRule" id="PRU00303"/>
    </source>
</evidence>
<dbReference type="EMBL" id="AE006468">
    <property type="protein sequence ID" value="AAL22153.1"/>
    <property type="molecule type" value="Genomic_DNA"/>
</dbReference>
<dbReference type="RefSeq" id="NP_462194.1">
    <property type="nucleotide sequence ID" value="NC_003197.2"/>
</dbReference>
<dbReference type="RefSeq" id="WP_000802069.1">
    <property type="nucleotide sequence ID" value="NC_003197.2"/>
</dbReference>
<dbReference type="SMR" id="Q7CPQ1"/>
<dbReference type="STRING" id="99287.STM3281"/>
<dbReference type="PaxDb" id="99287-STM3281"/>
<dbReference type="GeneID" id="1254804"/>
<dbReference type="GeneID" id="66757621"/>
<dbReference type="KEGG" id="stm:STM3281"/>
<dbReference type="PATRIC" id="fig|99287.12.peg.3480"/>
<dbReference type="HOGENOM" id="CLU_071600_0_0_6"/>
<dbReference type="OMA" id="YVEHRYS"/>
<dbReference type="PhylomeDB" id="Q7CPQ1"/>
<dbReference type="BioCyc" id="SENT99287:STM3281-MONOMER"/>
<dbReference type="Proteomes" id="UP000001014">
    <property type="component" value="Chromosome"/>
</dbReference>
<dbReference type="GO" id="GO:0005886">
    <property type="term" value="C:plasma membrane"/>
    <property type="evidence" value="ECO:0007669"/>
    <property type="project" value="UniProtKB-SubCell"/>
</dbReference>
<dbReference type="GO" id="GO:0051301">
    <property type="term" value="P:cell division"/>
    <property type="evidence" value="ECO:0007669"/>
    <property type="project" value="UniProtKB-KW"/>
</dbReference>
<dbReference type="FunFam" id="1.25.40.10:FF:000021">
    <property type="entry name" value="Lipoprotein NlpI"/>
    <property type="match status" value="1"/>
</dbReference>
<dbReference type="Gene3D" id="1.25.40.10">
    <property type="entry name" value="Tetratricopeptide repeat domain"/>
    <property type="match status" value="1"/>
</dbReference>
<dbReference type="InterPro" id="IPR023605">
    <property type="entry name" value="Lipoprotein_NlpI"/>
</dbReference>
<dbReference type="InterPro" id="IPR011990">
    <property type="entry name" value="TPR-like_helical_dom_sf"/>
</dbReference>
<dbReference type="InterPro" id="IPR019734">
    <property type="entry name" value="TPR_rpt"/>
</dbReference>
<dbReference type="InterPro" id="IPR050498">
    <property type="entry name" value="Ycf3"/>
</dbReference>
<dbReference type="NCBIfam" id="NF008391">
    <property type="entry name" value="PRK11189.1"/>
    <property type="match status" value="1"/>
</dbReference>
<dbReference type="PANTHER" id="PTHR44858">
    <property type="entry name" value="TETRATRICOPEPTIDE REPEAT PROTEIN 6"/>
    <property type="match status" value="1"/>
</dbReference>
<dbReference type="PANTHER" id="PTHR44858:SF1">
    <property type="entry name" value="UDP-N-ACETYLGLUCOSAMINE--PEPTIDE N-ACETYLGLUCOSAMINYLTRANSFERASE SPINDLY-RELATED"/>
    <property type="match status" value="1"/>
</dbReference>
<dbReference type="Pfam" id="PF13432">
    <property type="entry name" value="TPR_16"/>
    <property type="match status" value="1"/>
</dbReference>
<dbReference type="PIRSF" id="PIRSF004654">
    <property type="entry name" value="NlpI"/>
    <property type="match status" value="1"/>
</dbReference>
<dbReference type="SMART" id="SM00028">
    <property type="entry name" value="TPR"/>
    <property type="match status" value="3"/>
</dbReference>
<dbReference type="SUPFAM" id="SSF48452">
    <property type="entry name" value="TPR-like"/>
    <property type="match status" value="1"/>
</dbReference>
<dbReference type="PROSITE" id="PS51257">
    <property type="entry name" value="PROKAR_LIPOPROTEIN"/>
    <property type="match status" value="1"/>
</dbReference>
<dbReference type="PROSITE" id="PS50005">
    <property type="entry name" value="TPR"/>
    <property type="match status" value="3"/>
</dbReference>
<dbReference type="PROSITE" id="PS50293">
    <property type="entry name" value="TPR_REGION"/>
    <property type="match status" value="2"/>
</dbReference>
<feature type="signal peptide" evidence="2">
    <location>
        <begin position="1"/>
        <end position="18"/>
    </location>
</feature>
<feature type="chain" id="PRO_0000413482" description="Lipoprotein NlpI">
    <location>
        <begin position="19"/>
        <end position="294"/>
    </location>
</feature>
<feature type="repeat" description="TPR 1">
    <location>
        <begin position="62"/>
        <end position="95"/>
    </location>
</feature>
<feature type="repeat" description="TPR 2">
    <location>
        <begin position="96"/>
        <end position="129"/>
    </location>
</feature>
<feature type="repeat" description="TPR 3">
    <location>
        <begin position="234"/>
        <end position="267"/>
    </location>
</feature>
<feature type="lipid moiety-binding region" description="N-palmitoyl cysteine" evidence="2">
    <location>
        <position position="19"/>
    </location>
</feature>
<feature type="lipid moiety-binding region" description="S-diacylglycerol cysteine" evidence="2">
    <location>
        <position position="19"/>
    </location>
</feature>
<proteinExistence type="inferred from homology"/>
<name>NLPI_SALTY</name>
<keyword id="KW-0131">Cell cycle</keyword>
<keyword id="KW-0132">Cell division</keyword>
<keyword id="KW-1003">Cell membrane</keyword>
<keyword id="KW-0449">Lipoprotein</keyword>
<keyword id="KW-0472">Membrane</keyword>
<keyword id="KW-0564">Palmitate</keyword>
<keyword id="KW-1185">Reference proteome</keyword>
<keyword id="KW-0677">Repeat</keyword>
<keyword id="KW-0732">Signal</keyword>
<keyword id="KW-0802">TPR repeat</keyword>
<protein>
    <recommendedName>
        <fullName>Lipoprotein NlpI</fullName>
    </recommendedName>
</protein>
<accession>Q7CPQ1</accession>
<comment type="function">
    <text evidence="1">May be involved in cell division. May play a role in bacterial septation or regulation of cell wall degradation during cell division (By similarity).</text>
</comment>
<comment type="subunit">
    <text evidence="1">Homodimer.</text>
</comment>
<comment type="subcellular location">
    <subcellularLocation>
        <location evidence="2">Cell membrane</location>
        <topology evidence="2">Lipid-anchor</topology>
    </subcellularLocation>
</comment>
<organism>
    <name type="scientific">Salmonella typhimurium (strain LT2 / SGSC1412 / ATCC 700720)</name>
    <dbReference type="NCBI Taxonomy" id="99287"/>
    <lineage>
        <taxon>Bacteria</taxon>
        <taxon>Pseudomonadati</taxon>
        <taxon>Pseudomonadota</taxon>
        <taxon>Gammaproteobacteria</taxon>
        <taxon>Enterobacterales</taxon>
        <taxon>Enterobacteriaceae</taxon>
        <taxon>Salmonella</taxon>
    </lineage>
</organism>
<gene>
    <name type="primary">nlpI</name>
    <name type="ordered locus">STM3281</name>
</gene>
<sequence>MKPFLRWCFVATALTLAGCSNSAWRKSEVLAVPLQPTLQQEVILARMEQILASRALTDDERAQLLYERGVLYDSLGLRALARNDFSQALAIRPDMPEVFNYLGIYLTQAGNFDAAYEAFDSVLELDPTYNYAHLNRGIALYYGGRDKLAQDDLLAFYQDDPNDPYRSLWLYLVEQKLNEKQAKEALKARFEKSDKEQWGWNIVEFYLGDISEATLMERLKADATDNTSLAEHLSETNFYLGKYYLSLGDLDSATALFKLAVANNVHNFVEHRYALLELSLLGQDQDDLAESDQQ</sequence>